<organism>
    <name type="scientific">Actinobacillus pleuropneumoniae serotype 3 (strain JL03)</name>
    <dbReference type="NCBI Taxonomy" id="434271"/>
    <lineage>
        <taxon>Bacteria</taxon>
        <taxon>Pseudomonadati</taxon>
        <taxon>Pseudomonadota</taxon>
        <taxon>Gammaproteobacteria</taxon>
        <taxon>Pasteurellales</taxon>
        <taxon>Pasteurellaceae</taxon>
        <taxon>Actinobacillus</taxon>
    </lineage>
</organism>
<name>MOAC_ACTPJ</name>
<evidence type="ECO:0000255" key="1">
    <source>
        <dbReference type="HAMAP-Rule" id="MF_01224"/>
    </source>
</evidence>
<protein>
    <recommendedName>
        <fullName evidence="1">Cyclic pyranopterin monophosphate synthase</fullName>
        <ecNumber evidence="1">4.6.1.17</ecNumber>
    </recommendedName>
    <alternativeName>
        <fullName evidence="1">Molybdenum cofactor biosynthesis protein C</fullName>
    </alternativeName>
</protein>
<sequence>MNQFTHINTNGEANMVDVSMKQETVRVARAEAFVSMNAETLQMIISGNHHKGDVFATARIAGIQAAKRTWELIPLCHPLLLSKVEVQLEALPETNQVRIESLCKLTGKTGVEMEALTAASVAALTIYDMCKAVQKDMVIENVRLLHKSGGKSGEFNAE</sequence>
<dbReference type="EC" id="4.6.1.17" evidence="1"/>
<dbReference type="EMBL" id="CP000687">
    <property type="protein sequence ID" value="ABY69258.1"/>
    <property type="molecule type" value="Genomic_DNA"/>
</dbReference>
<dbReference type="RefSeq" id="WP_005597027.1">
    <property type="nucleotide sequence ID" value="NC_010278.1"/>
</dbReference>
<dbReference type="SMR" id="B0BNX3"/>
<dbReference type="GeneID" id="92744839"/>
<dbReference type="KEGG" id="apj:APJL_0689"/>
<dbReference type="HOGENOM" id="CLU_074693_1_1_6"/>
<dbReference type="UniPathway" id="UPA00344"/>
<dbReference type="Proteomes" id="UP000008547">
    <property type="component" value="Chromosome"/>
</dbReference>
<dbReference type="GO" id="GO:0061799">
    <property type="term" value="F:cyclic pyranopterin monophosphate synthase activity"/>
    <property type="evidence" value="ECO:0007669"/>
    <property type="project" value="UniProtKB-UniRule"/>
</dbReference>
<dbReference type="GO" id="GO:0061798">
    <property type="term" value="F:GTP 3',8'-cyclase activity"/>
    <property type="evidence" value="ECO:0007669"/>
    <property type="project" value="TreeGrafter"/>
</dbReference>
<dbReference type="GO" id="GO:0006777">
    <property type="term" value="P:Mo-molybdopterin cofactor biosynthetic process"/>
    <property type="evidence" value="ECO:0007669"/>
    <property type="project" value="UniProtKB-UniRule"/>
</dbReference>
<dbReference type="CDD" id="cd01420">
    <property type="entry name" value="MoaC_PE"/>
    <property type="match status" value="1"/>
</dbReference>
<dbReference type="FunFam" id="3.30.70.640:FF:000001">
    <property type="entry name" value="Cyclic pyranopterin monophosphate synthase"/>
    <property type="match status" value="1"/>
</dbReference>
<dbReference type="Gene3D" id="3.30.70.640">
    <property type="entry name" value="Molybdopterin cofactor biosynthesis C (MoaC) domain"/>
    <property type="match status" value="1"/>
</dbReference>
<dbReference type="HAMAP" id="MF_01224_B">
    <property type="entry name" value="MoaC_B"/>
    <property type="match status" value="1"/>
</dbReference>
<dbReference type="InterPro" id="IPR023045">
    <property type="entry name" value="MoaC"/>
</dbReference>
<dbReference type="InterPro" id="IPR047594">
    <property type="entry name" value="MoaC_bact/euk"/>
</dbReference>
<dbReference type="InterPro" id="IPR036522">
    <property type="entry name" value="MoaC_sf"/>
</dbReference>
<dbReference type="InterPro" id="IPR050105">
    <property type="entry name" value="MoCo_biosynth_MoaA/MoaC"/>
</dbReference>
<dbReference type="InterPro" id="IPR002820">
    <property type="entry name" value="Mopterin_CF_biosynth-C_dom"/>
</dbReference>
<dbReference type="NCBIfam" id="TIGR00581">
    <property type="entry name" value="moaC"/>
    <property type="match status" value="1"/>
</dbReference>
<dbReference type="NCBIfam" id="NF006870">
    <property type="entry name" value="PRK09364.1"/>
    <property type="match status" value="1"/>
</dbReference>
<dbReference type="PANTHER" id="PTHR22960:SF0">
    <property type="entry name" value="MOLYBDENUM COFACTOR BIOSYNTHESIS PROTEIN 1"/>
    <property type="match status" value="1"/>
</dbReference>
<dbReference type="PANTHER" id="PTHR22960">
    <property type="entry name" value="MOLYBDOPTERIN COFACTOR SYNTHESIS PROTEIN A"/>
    <property type="match status" value="1"/>
</dbReference>
<dbReference type="Pfam" id="PF01967">
    <property type="entry name" value="MoaC"/>
    <property type="match status" value="1"/>
</dbReference>
<dbReference type="SUPFAM" id="SSF55040">
    <property type="entry name" value="Molybdenum cofactor biosynthesis protein C, MoaC"/>
    <property type="match status" value="1"/>
</dbReference>
<comment type="function">
    <text evidence="1">Catalyzes the conversion of (8S)-3',8-cyclo-7,8-dihydroguanosine 5'-triphosphate to cyclic pyranopterin monophosphate (cPMP).</text>
</comment>
<comment type="catalytic activity">
    <reaction evidence="1">
        <text>(8S)-3',8-cyclo-7,8-dihydroguanosine 5'-triphosphate = cyclic pyranopterin phosphate + diphosphate</text>
        <dbReference type="Rhea" id="RHEA:49580"/>
        <dbReference type="ChEBI" id="CHEBI:33019"/>
        <dbReference type="ChEBI" id="CHEBI:59648"/>
        <dbReference type="ChEBI" id="CHEBI:131766"/>
        <dbReference type="EC" id="4.6.1.17"/>
    </reaction>
</comment>
<comment type="pathway">
    <text evidence="1">Cofactor biosynthesis; molybdopterin biosynthesis.</text>
</comment>
<comment type="subunit">
    <text evidence="1">Homohexamer; trimer of dimers.</text>
</comment>
<comment type="similarity">
    <text evidence="1">Belongs to the MoaC family.</text>
</comment>
<proteinExistence type="inferred from homology"/>
<feature type="chain" id="PRO_1000139239" description="Cyclic pyranopterin monophosphate synthase">
    <location>
        <begin position="1"/>
        <end position="158"/>
    </location>
</feature>
<feature type="active site" evidence="1">
    <location>
        <position position="128"/>
    </location>
</feature>
<feature type="binding site" evidence="1">
    <location>
        <begin position="75"/>
        <end position="77"/>
    </location>
    <ligand>
        <name>substrate</name>
    </ligand>
</feature>
<feature type="binding site" evidence="1">
    <location>
        <begin position="113"/>
        <end position="114"/>
    </location>
    <ligand>
        <name>substrate</name>
    </ligand>
</feature>
<accession>B0BNX3</accession>
<gene>
    <name evidence="1" type="primary">moaC</name>
    <name type="ordered locus">APJL_0689</name>
</gene>
<keyword id="KW-0456">Lyase</keyword>
<keyword id="KW-0501">Molybdenum cofactor biosynthesis</keyword>
<reference key="1">
    <citation type="journal article" date="2008" name="PLoS ONE">
        <title>Genome biology of Actinobacillus pleuropneumoniae JL03, an isolate of serotype 3 prevalent in China.</title>
        <authorList>
            <person name="Xu Z."/>
            <person name="Zhou Y."/>
            <person name="Li L."/>
            <person name="Zhou R."/>
            <person name="Xiao S."/>
            <person name="Wan Y."/>
            <person name="Zhang S."/>
            <person name="Wang K."/>
            <person name="Li W."/>
            <person name="Li L."/>
            <person name="Jin H."/>
            <person name="Kang M."/>
            <person name="Dalai B."/>
            <person name="Li T."/>
            <person name="Liu L."/>
            <person name="Cheng Y."/>
            <person name="Zhang L."/>
            <person name="Xu T."/>
            <person name="Zheng H."/>
            <person name="Pu S."/>
            <person name="Wang B."/>
            <person name="Gu W."/>
            <person name="Zhang X.L."/>
            <person name="Zhu G.-F."/>
            <person name="Wang S."/>
            <person name="Zhao G.-P."/>
            <person name="Chen H."/>
        </authorList>
    </citation>
    <scope>NUCLEOTIDE SEQUENCE [LARGE SCALE GENOMIC DNA]</scope>
    <source>
        <strain>JL03</strain>
    </source>
</reference>